<organism>
    <name type="scientific">Parvibaculum lavamentivorans (strain DS-1 / DSM 13023 / NCIMB 13966)</name>
    <dbReference type="NCBI Taxonomy" id="402881"/>
    <lineage>
        <taxon>Bacteria</taxon>
        <taxon>Pseudomonadati</taxon>
        <taxon>Pseudomonadota</taxon>
        <taxon>Alphaproteobacteria</taxon>
        <taxon>Hyphomicrobiales</taxon>
        <taxon>Parvibaculaceae</taxon>
        <taxon>Parvibaculum</taxon>
    </lineage>
</organism>
<dbReference type="EMBL" id="CP000774">
    <property type="protein sequence ID" value="ABS65184.1"/>
    <property type="molecule type" value="Genomic_DNA"/>
</dbReference>
<dbReference type="RefSeq" id="WP_012112444.1">
    <property type="nucleotide sequence ID" value="NC_009719.1"/>
</dbReference>
<dbReference type="SMR" id="A7HZ51"/>
<dbReference type="STRING" id="402881.Plav_3586"/>
<dbReference type="KEGG" id="pla:Plav_3586"/>
<dbReference type="eggNOG" id="COG0792">
    <property type="taxonomic scope" value="Bacteria"/>
</dbReference>
<dbReference type="HOGENOM" id="CLU_115353_0_2_5"/>
<dbReference type="OrthoDB" id="9812968at2"/>
<dbReference type="Proteomes" id="UP000006377">
    <property type="component" value="Chromosome"/>
</dbReference>
<dbReference type="GO" id="GO:0003676">
    <property type="term" value="F:nucleic acid binding"/>
    <property type="evidence" value="ECO:0007669"/>
    <property type="project" value="InterPro"/>
</dbReference>
<dbReference type="Gene3D" id="3.40.1350.10">
    <property type="match status" value="1"/>
</dbReference>
<dbReference type="HAMAP" id="MF_00048">
    <property type="entry name" value="UPF0102"/>
    <property type="match status" value="1"/>
</dbReference>
<dbReference type="InterPro" id="IPR011335">
    <property type="entry name" value="Restrct_endonuc-II-like"/>
</dbReference>
<dbReference type="InterPro" id="IPR011856">
    <property type="entry name" value="tRNA_endonuc-like_dom_sf"/>
</dbReference>
<dbReference type="InterPro" id="IPR003509">
    <property type="entry name" value="UPF0102_YraN-like"/>
</dbReference>
<dbReference type="NCBIfam" id="NF009151">
    <property type="entry name" value="PRK12497.1-5"/>
    <property type="match status" value="1"/>
</dbReference>
<dbReference type="PANTHER" id="PTHR34039">
    <property type="entry name" value="UPF0102 PROTEIN YRAN"/>
    <property type="match status" value="1"/>
</dbReference>
<dbReference type="PANTHER" id="PTHR34039:SF1">
    <property type="entry name" value="UPF0102 PROTEIN YRAN"/>
    <property type="match status" value="1"/>
</dbReference>
<dbReference type="Pfam" id="PF02021">
    <property type="entry name" value="UPF0102"/>
    <property type="match status" value="1"/>
</dbReference>
<dbReference type="SUPFAM" id="SSF52980">
    <property type="entry name" value="Restriction endonuclease-like"/>
    <property type="match status" value="1"/>
</dbReference>
<reference key="1">
    <citation type="journal article" date="2011" name="Stand. Genomic Sci.">
        <title>Complete genome sequence of Parvibaculum lavamentivorans type strain (DS-1(T)).</title>
        <authorList>
            <person name="Schleheck D."/>
            <person name="Weiss M."/>
            <person name="Pitluck S."/>
            <person name="Bruce D."/>
            <person name="Land M.L."/>
            <person name="Han S."/>
            <person name="Saunders E."/>
            <person name="Tapia R."/>
            <person name="Detter C."/>
            <person name="Brettin T."/>
            <person name="Han J."/>
            <person name="Woyke T."/>
            <person name="Goodwin L."/>
            <person name="Pennacchio L."/>
            <person name="Nolan M."/>
            <person name="Cook A.M."/>
            <person name="Kjelleberg S."/>
            <person name="Thomas T."/>
        </authorList>
    </citation>
    <scope>NUCLEOTIDE SEQUENCE [LARGE SCALE GENOMIC DNA]</scope>
    <source>
        <strain>DS-1 / DSM 13023 / NCIMB 13966</strain>
    </source>
</reference>
<sequence>MKPARFAPRAARKGNPATGLAAYRLGLRAETLAVLLLRLKGYRVVARRLKTPAGEIDLVVRRGRALAVVEVKARGEGDAAAEALLPRQQRRLERAAAHLLGRYPHFADLDLRFDVVLIVPRRWPRHLADAWRP</sequence>
<evidence type="ECO:0000255" key="1">
    <source>
        <dbReference type="HAMAP-Rule" id="MF_00048"/>
    </source>
</evidence>
<protein>
    <recommendedName>
        <fullName evidence="1">UPF0102 protein Plav_3586</fullName>
    </recommendedName>
</protein>
<name>Y3586_PARL1</name>
<keyword id="KW-1185">Reference proteome</keyword>
<feature type="chain" id="PRO_0000336218" description="UPF0102 protein Plav_3586">
    <location>
        <begin position="1"/>
        <end position="133"/>
    </location>
</feature>
<accession>A7HZ51</accession>
<gene>
    <name type="ordered locus">Plav_3586</name>
</gene>
<proteinExistence type="inferred from homology"/>
<comment type="similarity">
    <text evidence="1">Belongs to the UPF0102 family.</text>
</comment>